<keyword id="KW-0965">Cell junction</keyword>
<keyword id="KW-1003">Cell membrane</keyword>
<keyword id="KW-1015">Disulfide bond</keyword>
<keyword id="KW-0303">Gap junction</keyword>
<keyword id="KW-0472">Membrane</keyword>
<keyword id="KW-1185">Reference proteome</keyword>
<keyword id="KW-0812">Transmembrane</keyword>
<keyword id="KW-1133">Transmembrane helix</keyword>
<reference key="1">
    <citation type="journal article" date="1992" name="J. Biol. Chem.">
        <title>Two gap junction genes, connexin 31.1 and 30.3, are closely linked on mouse chromosome 4 and preferentially expressed in skin.</title>
        <authorList>
            <person name="Hennemann H."/>
            <person name="Dahl E."/>
            <person name="White J.B."/>
            <person name="Schwarz H.J."/>
            <person name="Lalley P.A."/>
            <person name="Chang S."/>
            <person name="Nicholson B.J."/>
            <person name="Willecke K."/>
        </authorList>
    </citation>
    <scope>NUCLEOTIDE SEQUENCE [GENOMIC DNA]</scope>
    <scope>TISSUE SPECIFICITY</scope>
    <source>
        <tissue>Skin</tissue>
    </source>
</reference>
<reference key="2">
    <citation type="journal article" date="2004" name="Genome Res.">
        <title>The status, quality, and expansion of the NIH full-length cDNA project: the Mammalian Gene Collection (MGC).</title>
        <authorList>
            <consortium name="The MGC Project Team"/>
        </authorList>
    </citation>
    <scope>NUCLEOTIDE SEQUENCE [LARGE SCALE MRNA]</scope>
    <source>
        <tissue>Uterus</tissue>
    </source>
</reference>
<reference key="3">
    <citation type="journal article" date="2005" name="Am. J. Physiol.">
        <title>Cochlear gap junctions coassembled from Cx26 and 30 show faster intercellular Ca2+ signaling than homomeric counterparts.</title>
        <authorList>
            <person name="Sun J."/>
            <person name="Ahmad S."/>
            <person name="Chen S."/>
            <person name="Tang W."/>
            <person name="Zhang Y."/>
            <person name="Chen P."/>
            <person name="Lin X."/>
        </authorList>
    </citation>
    <scope>FUNCTION</scope>
    <scope>SUBCELLULAR LOCATION</scope>
    <scope>SUBUNIT</scope>
    <scope>DEVELOPMENTAL STAGE</scope>
    <scope>TISSUE SPECIFICITY</scope>
</reference>
<gene>
    <name type="primary">Gjb4</name>
    <name type="synonym">Cxn-30.3</name>
</gene>
<protein>
    <recommendedName>
        <fullName>Gap junction beta-4 protein</fullName>
    </recommendedName>
    <alternativeName>
        <fullName evidence="4">Connexin-30.3</fullName>
        <shortName>Cx30.3</shortName>
    </alternativeName>
</protein>
<name>CXB4_MOUSE</name>
<evidence type="ECO:0000250" key="1">
    <source>
        <dbReference type="UniProtKB" id="P29033"/>
    </source>
</evidence>
<evidence type="ECO:0000269" key="2">
    <source>
    </source>
</evidence>
<evidence type="ECO:0000269" key="3">
    <source>
    </source>
</evidence>
<evidence type="ECO:0000303" key="4">
    <source>
    </source>
</evidence>
<evidence type="ECO:0000305" key="5"/>
<comment type="function">
    <text evidence="1 3">Structural component of gap junctions (PubMed:15692151). Gap junctions are dodecameric channels that connect the cytoplasm of adjoining cells. They are formed by the docking of two hexameric hemichannels, one from each cell membrane (By similarity). Small molecules and ions diffuse from one cell to a neighboring cell via the central pore (PubMed:15692151).</text>
</comment>
<comment type="subunit">
    <text evidence="1 3">A hemichannel or connexon is composed of a hexamer of connexins. A functional gap junction is formed by the apposition of two hemichannels (By similarity). Forms heteromeric channels with GJB2 (PubMed:15692151).</text>
</comment>
<comment type="subcellular location">
    <subcellularLocation>
        <location evidence="3">Cell membrane</location>
        <topology evidence="5">Multi-pass membrane protein</topology>
    </subcellularLocation>
    <subcellularLocation>
        <location evidence="3">Cell junction</location>
        <location evidence="3">Gap junction</location>
    </subcellularLocation>
    <text evidence="3">Colocalizes with GJB2 at gap junction plaques in the cochlea.</text>
</comment>
<comment type="tissue specificity">
    <text evidence="2 3">Detected in cochlea (at protein level) (PubMed:15692151). Detected in cochlea (PubMed:15692151). Expressed in skin (PubMed:1512260).</text>
</comment>
<comment type="developmental stage">
    <text evidence="3">Detected in cochlea after 15 dpc. Detected in the spiral limbus in neoneates at 2, 8 and 10 days after birth, before the onset of hearing.</text>
</comment>
<comment type="similarity">
    <text evidence="5">Belongs to the connexin family. Beta-type (group I) subfamily.</text>
</comment>
<feature type="chain" id="PRO_0000057866" description="Gap junction beta-4 protein">
    <location>
        <begin position="1"/>
        <end position="266"/>
    </location>
</feature>
<feature type="intramembrane region" evidence="1">
    <location>
        <begin position="2"/>
        <end position="13"/>
    </location>
</feature>
<feature type="topological domain" description="Cytoplasmic" evidence="5">
    <location>
        <begin position="14"/>
        <end position="20"/>
    </location>
</feature>
<feature type="transmembrane region" description="Helical" evidence="1">
    <location>
        <begin position="21"/>
        <end position="40"/>
    </location>
</feature>
<feature type="topological domain" description="Extracellular" evidence="5">
    <location>
        <begin position="41"/>
        <end position="73"/>
    </location>
</feature>
<feature type="transmembrane region" description="Helical" evidence="1">
    <location>
        <begin position="74"/>
        <end position="94"/>
    </location>
</feature>
<feature type="topological domain" description="Cytoplasmic" evidence="5">
    <location>
        <begin position="95"/>
        <end position="130"/>
    </location>
</feature>
<feature type="transmembrane region" description="Helical" evidence="1">
    <location>
        <begin position="131"/>
        <end position="151"/>
    </location>
</feature>
<feature type="topological domain" description="Extracellular" evidence="5">
    <location>
        <begin position="152"/>
        <end position="184"/>
    </location>
</feature>
<feature type="transmembrane region" description="Helical" evidence="1">
    <location>
        <begin position="185"/>
        <end position="205"/>
    </location>
</feature>
<feature type="topological domain" description="Cytoplasmic" evidence="5">
    <location>
        <begin position="206"/>
        <end position="266"/>
    </location>
</feature>
<feature type="disulfide bond" evidence="1">
    <location>
        <begin position="53"/>
        <end position="175"/>
    </location>
</feature>
<feature type="disulfide bond" evidence="1">
    <location>
        <begin position="60"/>
        <end position="169"/>
    </location>
</feature>
<feature type="disulfide bond" evidence="1">
    <location>
        <begin position="64"/>
        <end position="164"/>
    </location>
</feature>
<dbReference type="EMBL" id="M91443">
    <property type="protein sequence ID" value="AAA37428.1"/>
    <property type="molecule type" value="Genomic_DNA"/>
</dbReference>
<dbReference type="EMBL" id="BC064060">
    <property type="protein sequence ID" value="AAH64060.1"/>
    <property type="molecule type" value="mRNA"/>
</dbReference>
<dbReference type="CCDS" id="CCDS18669.1"/>
<dbReference type="PIR" id="A43433">
    <property type="entry name" value="A43433"/>
</dbReference>
<dbReference type="RefSeq" id="NP_001407798.1">
    <property type="nucleotide sequence ID" value="NM_001420869.1"/>
</dbReference>
<dbReference type="RefSeq" id="NP_032153.1">
    <property type="nucleotide sequence ID" value="NM_008127.5"/>
</dbReference>
<dbReference type="SMR" id="Q02738"/>
<dbReference type="BioGRID" id="199934">
    <property type="interactions" value="1"/>
</dbReference>
<dbReference type="FunCoup" id="Q02738">
    <property type="interactions" value="55"/>
</dbReference>
<dbReference type="STRING" id="10090.ENSMUSP00000101696"/>
<dbReference type="PhosphoSitePlus" id="Q02738"/>
<dbReference type="PaxDb" id="10090-ENSMUSP00000101696"/>
<dbReference type="ProteomicsDB" id="279217"/>
<dbReference type="Antibodypedia" id="17219">
    <property type="antibodies" value="166 antibodies from 25 providers"/>
</dbReference>
<dbReference type="Ensembl" id="ENSMUST00000060419.2">
    <property type="protein sequence ID" value="ENSMUSP00000053307.2"/>
    <property type="gene ID" value="ENSMUSG00000046623.9"/>
</dbReference>
<dbReference type="Ensembl" id="ENSMUST00000106090.8">
    <property type="protein sequence ID" value="ENSMUSP00000101696.2"/>
    <property type="gene ID" value="ENSMUSG00000046623.9"/>
</dbReference>
<dbReference type="GeneID" id="14621"/>
<dbReference type="KEGG" id="mmu:14621"/>
<dbReference type="UCSC" id="uc008uuu.1">
    <property type="organism name" value="mouse"/>
</dbReference>
<dbReference type="AGR" id="MGI:95722"/>
<dbReference type="CTD" id="127534"/>
<dbReference type="MGI" id="MGI:95722">
    <property type="gene designation" value="Gjb4"/>
</dbReference>
<dbReference type="VEuPathDB" id="HostDB:ENSMUSG00000046623"/>
<dbReference type="eggNOG" id="ENOG502R3YE">
    <property type="taxonomic scope" value="Eukaryota"/>
</dbReference>
<dbReference type="GeneTree" id="ENSGT01030000234513"/>
<dbReference type="HOGENOM" id="CLU_037388_4_1_1"/>
<dbReference type="InParanoid" id="Q02738"/>
<dbReference type="OMA" id="QDYDMPR"/>
<dbReference type="OrthoDB" id="9441654at2759"/>
<dbReference type="PhylomeDB" id="Q02738"/>
<dbReference type="TreeFam" id="TF329606"/>
<dbReference type="Reactome" id="R-MMU-190861">
    <property type="pathway name" value="Gap junction assembly"/>
</dbReference>
<dbReference type="BioGRID-ORCS" id="14621">
    <property type="hits" value="3 hits in 79 CRISPR screens"/>
</dbReference>
<dbReference type="ChiTaRS" id="Gjb4">
    <property type="organism name" value="mouse"/>
</dbReference>
<dbReference type="PRO" id="PR:Q02738"/>
<dbReference type="Proteomes" id="UP000000589">
    <property type="component" value="Chromosome 4"/>
</dbReference>
<dbReference type="RNAct" id="Q02738">
    <property type="molecule type" value="protein"/>
</dbReference>
<dbReference type="Bgee" id="ENSMUSG00000046623">
    <property type="expression patterns" value="Expressed in lip and 63 other cell types or tissues"/>
</dbReference>
<dbReference type="ExpressionAtlas" id="Q02738">
    <property type="expression patterns" value="baseline and differential"/>
</dbReference>
<dbReference type="GO" id="GO:0005922">
    <property type="term" value="C:connexin complex"/>
    <property type="evidence" value="ECO:0000314"/>
    <property type="project" value="UniProtKB"/>
</dbReference>
<dbReference type="GO" id="GO:0005730">
    <property type="term" value="C:nucleolus"/>
    <property type="evidence" value="ECO:0007669"/>
    <property type="project" value="Ensembl"/>
</dbReference>
<dbReference type="GO" id="GO:0005654">
    <property type="term" value="C:nucleoplasm"/>
    <property type="evidence" value="ECO:0007669"/>
    <property type="project" value="Ensembl"/>
</dbReference>
<dbReference type="GO" id="GO:0005886">
    <property type="term" value="C:plasma membrane"/>
    <property type="evidence" value="ECO:0000314"/>
    <property type="project" value="UniProtKB"/>
</dbReference>
<dbReference type="GO" id="GO:0005243">
    <property type="term" value="F:gap junction channel activity"/>
    <property type="evidence" value="ECO:0000314"/>
    <property type="project" value="UniProtKB"/>
</dbReference>
<dbReference type="GO" id="GO:0007267">
    <property type="term" value="P:cell-cell signaling"/>
    <property type="evidence" value="ECO:0000314"/>
    <property type="project" value="UniProtKB"/>
</dbReference>
<dbReference type="GO" id="GO:1990349">
    <property type="term" value="P:gap junction-mediated intercellular transport"/>
    <property type="evidence" value="ECO:0000314"/>
    <property type="project" value="UniProtKB"/>
</dbReference>
<dbReference type="GO" id="GO:0042048">
    <property type="term" value="P:olfactory behavior"/>
    <property type="evidence" value="ECO:0000315"/>
    <property type="project" value="MGI"/>
</dbReference>
<dbReference type="GO" id="GO:0007608">
    <property type="term" value="P:sensory perception of smell"/>
    <property type="evidence" value="ECO:0000315"/>
    <property type="project" value="MGI"/>
</dbReference>
<dbReference type="FunFam" id="1.20.1440.80:FF:000001">
    <property type="entry name" value="Gap junction alpha-1"/>
    <property type="match status" value="1"/>
</dbReference>
<dbReference type="Gene3D" id="1.20.1440.80">
    <property type="entry name" value="Gap junction channel protein cysteine-rich domain"/>
    <property type="match status" value="1"/>
</dbReference>
<dbReference type="InterPro" id="IPR000500">
    <property type="entry name" value="Connexin"/>
</dbReference>
<dbReference type="InterPro" id="IPR002270">
    <property type="entry name" value="Connexin-30.3"/>
</dbReference>
<dbReference type="InterPro" id="IPR019570">
    <property type="entry name" value="Connexin_CCC"/>
</dbReference>
<dbReference type="InterPro" id="IPR017990">
    <property type="entry name" value="Connexin_CS"/>
</dbReference>
<dbReference type="InterPro" id="IPR013092">
    <property type="entry name" value="Connexin_N"/>
</dbReference>
<dbReference type="InterPro" id="IPR038359">
    <property type="entry name" value="Connexin_N_sf"/>
</dbReference>
<dbReference type="PANTHER" id="PTHR11984">
    <property type="entry name" value="CONNEXIN"/>
    <property type="match status" value="1"/>
</dbReference>
<dbReference type="PANTHER" id="PTHR11984:SF30">
    <property type="entry name" value="GAP JUNCTION BETA-4 PROTEIN"/>
    <property type="match status" value="1"/>
</dbReference>
<dbReference type="Pfam" id="PF00029">
    <property type="entry name" value="Connexin"/>
    <property type="match status" value="1"/>
</dbReference>
<dbReference type="PRINTS" id="PR00206">
    <property type="entry name" value="CONNEXIN"/>
</dbReference>
<dbReference type="PRINTS" id="PR01142">
    <property type="entry name" value="CONNEXINB5"/>
</dbReference>
<dbReference type="SMART" id="SM00037">
    <property type="entry name" value="CNX"/>
    <property type="match status" value="1"/>
</dbReference>
<dbReference type="SMART" id="SM01089">
    <property type="entry name" value="Connexin_CCC"/>
    <property type="match status" value="1"/>
</dbReference>
<dbReference type="PROSITE" id="PS00407">
    <property type="entry name" value="CONNEXINS_1"/>
    <property type="match status" value="1"/>
</dbReference>
<dbReference type="PROSITE" id="PS00408">
    <property type="entry name" value="CONNEXINS_2"/>
    <property type="match status" value="1"/>
</dbReference>
<sequence>MNWGFLQGILSGVNKYSTALGRIWLSVVFIFRVLVYVVAAEEVWDDDQKDFICNTKQPGCPNVCYDEFFPVSHVRLWALQLILVTCPSLLVVMHVAYREERERKHRLKHGPNAPALYSNLSKKRGGLWWTYLLSLIFKAAVDSGFLYIFHCIYKDYDMPRVVACSVTPCPHTVDCYIARPTEKKVFTYFMVVTAAICILLNLSEVVYLVGKRCMEVFRPRRRKASRRHQLPDTCPPYVISKGGHPQDESVILTKAGMATVDAGVYP</sequence>
<accession>Q02738</accession>
<proteinExistence type="evidence at protein level"/>
<organism>
    <name type="scientific">Mus musculus</name>
    <name type="common">Mouse</name>
    <dbReference type="NCBI Taxonomy" id="10090"/>
    <lineage>
        <taxon>Eukaryota</taxon>
        <taxon>Metazoa</taxon>
        <taxon>Chordata</taxon>
        <taxon>Craniata</taxon>
        <taxon>Vertebrata</taxon>
        <taxon>Euteleostomi</taxon>
        <taxon>Mammalia</taxon>
        <taxon>Eutheria</taxon>
        <taxon>Euarchontoglires</taxon>
        <taxon>Glires</taxon>
        <taxon>Rodentia</taxon>
        <taxon>Myomorpha</taxon>
        <taxon>Muroidea</taxon>
        <taxon>Muridae</taxon>
        <taxon>Murinae</taxon>
        <taxon>Mus</taxon>
        <taxon>Mus</taxon>
    </lineage>
</organism>